<name>EFG_METPP</name>
<accession>A2SLG0</accession>
<proteinExistence type="inferred from homology"/>
<organism>
    <name type="scientific">Methylibium petroleiphilum (strain ATCC BAA-1232 / LMG 22953 / PM1)</name>
    <dbReference type="NCBI Taxonomy" id="420662"/>
    <lineage>
        <taxon>Bacteria</taxon>
        <taxon>Pseudomonadati</taxon>
        <taxon>Pseudomonadota</taxon>
        <taxon>Betaproteobacteria</taxon>
        <taxon>Burkholderiales</taxon>
        <taxon>Sphaerotilaceae</taxon>
        <taxon>Methylibium</taxon>
    </lineage>
</organism>
<evidence type="ECO:0000255" key="1">
    <source>
        <dbReference type="HAMAP-Rule" id="MF_00054"/>
    </source>
</evidence>
<gene>
    <name evidence="1" type="primary">fusA</name>
    <name type="ordered locus">Mpe_A3446</name>
</gene>
<keyword id="KW-0963">Cytoplasm</keyword>
<keyword id="KW-0251">Elongation factor</keyword>
<keyword id="KW-0342">GTP-binding</keyword>
<keyword id="KW-0547">Nucleotide-binding</keyword>
<keyword id="KW-0648">Protein biosynthesis</keyword>
<keyword id="KW-1185">Reference proteome</keyword>
<sequence length="700" mass="77495">MARKTPIERYRNIGISAHIDAGKTTTTERILFYTGVNHKIGEVHDGAATMDWMEQEQERGITITSAATTCFWKGMELAFPEHRINIIDTPGHVDFTIEVERSMRVLDGACMVYCAVGGVQPQSETVWRQANKYKVPRLAFVNKMDRTGANFYKVYDQMKVRLKANPVPIVLPIGAEENFTGVIDLIKMKAIIWDEASQGMKFNYEDIPADLQAESQKWRENMVEAAAEASEELMNKYLESGELTEAEIKFGIRTRTIAAEIQPMFCGTAFKNKGVQRMLDGVIDFMPSPIDIPPVPGHDDDDKEVVRRAADDEKFAALAFKLMTDPYVGQLTFVRVYSGVLKSGDSVFNPIRGKKERIGRILQMHANQREEIKEILAGDIAACVGLKEVTTGETLCDPDAIITLEKMIFPEPVISQAVEPKTKADQEKMGIALGRLAQEDPSFRVRTDEESGQTIISGMGELHLEIIVDRMKREFGVEANVGKPQVAYRETIRKPVSDIEGKFVRQSGGKGQYGHVVLKIEPQEPGKGFEFVDAIKGGVVPREFIPAVKKGVEDSLPNGVLAGFPVVDVKVTLTFGSYHEVDSNENAFKMAASLGFKDGCRKASPVILEPMMAVEVETPEDYAGNVMGDLSSRRGMVQGMDDMPGGGKAIKAEVPLSEMFGYSTTLRSMSQGRATYTMEFKHYSEAPKNVADAIITSRAK</sequence>
<dbReference type="EMBL" id="CP000555">
    <property type="protein sequence ID" value="ABM96399.1"/>
    <property type="molecule type" value="Genomic_DNA"/>
</dbReference>
<dbReference type="RefSeq" id="WP_011831020.1">
    <property type="nucleotide sequence ID" value="NC_008825.1"/>
</dbReference>
<dbReference type="SMR" id="A2SLG0"/>
<dbReference type="STRING" id="420662.Mpe_A3446"/>
<dbReference type="KEGG" id="mpt:Mpe_A3446"/>
<dbReference type="eggNOG" id="COG0480">
    <property type="taxonomic scope" value="Bacteria"/>
</dbReference>
<dbReference type="HOGENOM" id="CLU_002794_4_1_4"/>
<dbReference type="Proteomes" id="UP000000366">
    <property type="component" value="Chromosome"/>
</dbReference>
<dbReference type="GO" id="GO:0005737">
    <property type="term" value="C:cytoplasm"/>
    <property type="evidence" value="ECO:0007669"/>
    <property type="project" value="UniProtKB-SubCell"/>
</dbReference>
<dbReference type="GO" id="GO:0005525">
    <property type="term" value="F:GTP binding"/>
    <property type="evidence" value="ECO:0007669"/>
    <property type="project" value="UniProtKB-UniRule"/>
</dbReference>
<dbReference type="GO" id="GO:0003924">
    <property type="term" value="F:GTPase activity"/>
    <property type="evidence" value="ECO:0007669"/>
    <property type="project" value="InterPro"/>
</dbReference>
<dbReference type="GO" id="GO:0097216">
    <property type="term" value="F:guanosine tetraphosphate binding"/>
    <property type="evidence" value="ECO:0007669"/>
    <property type="project" value="UniProtKB-ARBA"/>
</dbReference>
<dbReference type="GO" id="GO:0003746">
    <property type="term" value="F:translation elongation factor activity"/>
    <property type="evidence" value="ECO:0007669"/>
    <property type="project" value="UniProtKB-UniRule"/>
</dbReference>
<dbReference type="GO" id="GO:0032790">
    <property type="term" value="P:ribosome disassembly"/>
    <property type="evidence" value="ECO:0007669"/>
    <property type="project" value="TreeGrafter"/>
</dbReference>
<dbReference type="CDD" id="cd01886">
    <property type="entry name" value="EF-G"/>
    <property type="match status" value="1"/>
</dbReference>
<dbReference type="CDD" id="cd16262">
    <property type="entry name" value="EFG_III"/>
    <property type="match status" value="1"/>
</dbReference>
<dbReference type="CDD" id="cd01434">
    <property type="entry name" value="EFG_mtEFG1_IV"/>
    <property type="match status" value="1"/>
</dbReference>
<dbReference type="CDD" id="cd03713">
    <property type="entry name" value="EFG_mtEFG_C"/>
    <property type="match status" value="1"/>
</dbReference>
<dbReference type="CDD" id="cd04088">
    <property type="entry name" value="EFG_mtEFG_II"/>
    <property type="match status" value="1"/>
</dbReference>
<dbReference type="FunFam" id="2.40.30.10:FF:000006">
    <property type="entry name" value="Elongation factor G"/>
    <property type="match status" value="1"/>
</dbReference>
<dbReference type="FunFam" id="3.30.230.10:FF:000003">
    <property type="entry name" value="Elongation factor G"/>
    <property type="match status" value="1"/>
</dbReference>
<dbReference type="FunFam" id="3.30.70.240:FF:000001">
    <property type="entry name" value="Elongation factor G"/>
    <property type="match status" value="1"/>
</dbReference>
<dbReference type="FunFam" id="3.30.70.870:FF:000001">
    <property type="entry name" value="Elongation factor G"/>
    <property type="match status" value="1"/>
</dbReference>
<dbReference type="FunFam" id="3.40.50.300:FF:000029">
    <property type="entry name" value="Elongation factor G"/>
    <property type="match status" value="1"/>
</dbReference>
<dbReference type="Gene3D" id="3.30.230.10">
    <property type="match status" value="1"/>
</dbReference>
<dbReference type="Gene3D" id="3.30.70.240">
    <property type="match status" value="1"/>
</dbReference>
<dbReference type="Gene3D" id="3.30.70.870">
    <property type="entry name" value="Elongation Factor G (Translational Gtpase), domain 3"/>
    <property type="match status" value="1"/>
</dbReference>
<dbReference type="Gene3D" id="3.40.50.300">
    <property type="entry name" value="P-loop containing nucleotide triphosphate hydrolases"/>
    <property type="match status" value="1"/>
</dbReference>
<dbReference type="Gene3D" id="2.40.30.10">
    <property type="entry name" value="Translation factors"/>
    <property type="match status" value="1"/>
</dbReference>
<dbReference type="HAMAP" id="MF_00054_B">
    <property type="entry name" value="EF_G_EF_2_B"/>
    <property type="match status" value="1"/>
</dbReference>
<dbReference type="InterPro" id="IPR041095">
    <property type="entry name" value="EFG_II"/>
</dbReference>
<dbReference type="InterPro" id="IPR009022">
    <property type="entry name" value="EFG_III"/>
</dbReference>
<dbReference type="InterPro" id="IPR035647">
    <property type="entry name" value="EFG_III/V"/>
</dbReference>
<dbReference type="InterPro" id="IPR047872">
    <property type="entry name" value="EFG_IV"/>
</dbReference>
<dbReference type="InterPro" id="IPR035649">
    <property type="entry name" value="EFG_V"/>
</dbReference>
<dbReference type="InterPro" id="IPR000640">
    <property type="entry name" value="EFG_V-like"/>
</dbReference>
<dbReference type="InterPro" id="IPR004161">
    <property type="entry name" value="EFTu-like_2"/>
</dbReference>
<dbReference type="InterPro" id="IPR031157">
    <property type="entry name" value="G_TR_CS"/>
</dbReference>
<dbReference type="InterPro" id="IPR027417">
    <property type="entry name" value="P-loop_NTPase"/>
</dbReference>
<dbReference type="InterPro" id="IPR020568">
    <property type="entry name" value="Ribosomal_Su5_D2-typ_SF"/>
</dbReference>
<dbReference type="InterPro" id="IPR014721">
    <property type="entry name" value="Ribsml_uS5_D2-typ_fold_subgr"/>
</dbReference>
<dbReference type="InterPro" id="IPR005225">
    <property type="entry name" value="Small_GTP-bd"/>
</dbReference>
<dbReference type="InterPro" id="IPR000795">
    <property type="entry name" value="T_Tr_GTP-bd_dom"/>
</dbReference>
<dbReference type="InterPro" id="IPR009000">
    <property type="entry name" value="Transl_B-barrel_sf"/>
</dbReference>
<dbReference type="InterPro" id="IPR004540">
    <property type="entry name" value="Transl_elong_EFG/EF2"/>
</dbReference>
<dbReference type="InterPro" id="IPR005517">
    <property type="entry name" value="Transl_elong_EFG/EF2_IV"/>
</dbReference>
<dbReference type="NCBIfam" id="TIGR00484">
    <property type="entry name" value="EF-G"/>
    <property type="match status" value="1"/>
</dbReference>
<dbReference type="NCBIfam" id="NF009381">
    <property type="entry name" value="PRK12740.1-5"/>
    <property type="match status" value="1"/>
</dbReference>
<dbReference type="NCBIfam" id="TIGR00231">
    <property type="entry name" value="small_GTP"/>
    <property type="match status" value="1"/>
</dbReference>
<dbReference type="PANTHER" id="PTHR43261:SF1">
    <property type="entry name" value="RIBOSOME-RELEASING FACTOR 2, MITOCHONDRIAL"/>
    <property type="match status" value="1"/>
</dbReference>
<dbReference type="PANTHER" id="PTHR43261">
    <property type="entry name" value="TRANSLATION ELONGATION FACTOR G-RELATED"/>
    <property type="match status" value="1"/>
</dbReference>
<dbReference type="Pfam" id="PF00679">
    <property type="entry name" value="EFG_C"/>
    <property type="match status" value="1"/>
</dbReference>
<dbReference type="Pfam" id="PF14492">
    <property type="entry name" value="EFG_III"/>
    <property type="match status" value="1"/>
</dbReference>
<dbReference type="Pfam" id="PF03764">
    <property type="entry name" value="EFG_IV"/>
    <property type="match status" value="1"/>
</dbReference>
<dbReference type="Pfam" id="PF00009">
    <property type="entry name" value="GTP_EFTU"/>
    <property type="match status" value="1"/>
</dbReference>
<dbReference type="Pfam" id="PF03144">
    <property type="entry name" value="GTP_EFTU_D2"/>
    <property type="match status" value="1"/>
</dbReference>
<dbReference type="PRINTS" id="PR00315">
    <property type="entry name" value="ELONGATNFCT"/>
</dbReference>
<dbReference type="SMART" id="SM00838">
    <property type="entry name" value="EFG_C"/>
    <property type="match status" value="1"/>
</dbReference>
<dbReference type="SMART" id="SM00889">
    <property type="entry name" value="EFG_IV"/>
    <property type="match status" value="1"/>
</dbReference>
<dbReference type="SUPFAM" id="SSF54980">
    <property type="entry name" value="EF-G C-terminal domain-like"/>
    <property type="match status" value="2"/>
</dbReference>
<dbReference type="SUPFAM" id="SSF52540">
    <property type="entry name" value="P-loop containing nucleoside triphosphate hydrolases"/>
    <property type="match status" value="1"/>
</dbReference>
<dbReference type="SUPFAM" id="SSF54211">
    <property type="entry name" value="Ribosomal protein S5 domain 2-like"/>
    <property type="match status" value="1"/>
</dbReference>
<dbReference type="SUPFAM" id="SSF50447">
    <property type="entry name" value="Translation proteins"/>
    <property type="match status" value="1"/>
</dbReference>
<dbReference type="PROSITE" id="PS00301">
    <property type="entry name" value="G_TR_1"/>
    <property type="match status" value="1"/>
</dbReference>
<dbReference type="PROSITE" id="PS51722">
    <property type="entry name" value="G_TR_2"/>
    <property type="match status" value="1"/>
</dbReference>
<reference key="1">
    <citation type="journal article" date="2007" name="J. Bacteriol.">
        <title>Whole-genome analysis of the methyl tert-butyl ether-degrading beta-proteobacterium Methylibium petroleiphilum PM1.</title>
        <authorList>
            <person name="Kane S.R."/>
            <person name="Chakicherla A.Y."/>
            <person name="Chain P.S.G."/>
            <person name="Schmidt R."/>
            <person name="Shin M.W."/>
            <person name="Legler T.C."/>
            <person name="Scow K.M."/>
            <person name="Larimer F.W."/>
            <person name="Lucas S.M."/>
            <person name="Richardson P.M."/>
            <person name="Hristova K.R."/>
        </authorList>
    </citation>
    <scope>NUCLEOTIDE SEQUENCE [LARGE SCALE GENOMIC DNA]</scope>
    <source>
        <strain>ATCC BAA-1232 / LMG 22953 / PM1</strain>
    </source>
</reference>
<feature type="chain" id="PRO_1000008849" description="Elongation factor G">
    <location>
        <begin position="1"/>
        <end position="700"/>
    </location>
</feature>
<feature type="domain" description="tr-type G">
    <location>
        <begin position="8"/>
        <end position="290"/>
    </location>
</feature>
<feature type="binding site" evidence="1">
    <location>
        <begin position="17"/>
        <end position="24"/>
    </location>
    <ligand>
        <name>GTP</name>
        <dbReference type="ChEBI" id="CHEBI:37565"/>
    </ligand>
</feature>
<feature type="binding site" evidence="1">
    <location>
        <begin position="88"/>
        <end position="92"/>
    </location>
    <ligand>
        <name>GTP</name>
        <dbReference type="ChEBI" id="CHEBI:37565"/>
    </ligand>
</feature>
<feature type="binding site" evidence="1">
    <location>
        <begin position="142"/>
        <end position="145"/>
    </location>
    <ligand>
        <name>GTP</name>
        <dbReference type="ChEBI" id="CHEBI:37565"/>
    </ligand>
</feature>
<protein>
    <recommendedName>
        <fullName evidence="1">Elongation factor G</fullName>
        <shortName evidence="1">EF-G</shortName>
    </recommendedName>
</protein>
<comment type="function">
    <text evidence="1">Catalyzes the GTP-dependent ribosomal translocation step during translation elongation. During this step, the ribosome changes from the pre-translocational (PRE) to the post-translocational (POST) state as the newly formed A-site-bound peptidyl-tRNA and P-site-bound deacylated tRNA move to the P and E sites, respectively. Catalyzes the coordinated movement of the two tRNA molecules, the mRNA and conformational changes in the ribosome.</text>
</comment>
<comment type="subcellular location">
    <subcellularLocation>
        <location evidence="1">Cytoplasm</location>
    </subcellularLocation>
</comment>
<comment type="similarity">
    <text evidence="1">Belongs to the TRAFAC class translation factor GTPase superfamily. Classic translation factor GTPase family. EF-G/EF-2 subfamily.</text>
</comment>